<accession>P15098</accession>
<reference key="1">
    <citation type="journal article" date="1989" name="J. Gen. Virol.">
        <title>Nucleotide sequence of narcissus mosaic virus RNA.</title>
        <authorList>
            <person name="Zuidema D."/>
            <person name="Linthorst H.J.M."/>
            <person name="Huisman M.J."/>
            <person name="Asjes C.J."/>
            <person name="Bol J.F."/>
        </authorList>
    </citation>
    <scope>NUCLEOTIDE SEQUENCE [GENOMIC RNA]</scope>
</reference>
<reference key="2">
    <citation type="journal article" date="2005" name="Mol. Plant Microbe Interact.">
        <title>A new cell-to-cell transport model for Potexviruses.</title>
        <authorList>
            <person name="Verchot-Lubicz J."/>
        </authorList>
    </citation>
    <scope>REVIEW</scope>
</reference>
<organism>
    <name type="scientific">Narcissus mosaic virus</name>
    <name type="common">NMV</name>
    <dbReference type="NCBI Taxonomy" id="12180"/>
    <lineage>
        <taxon>Viruses</taxon>
        <taxon>Riboviria</taxon>
        <taxon>Orthornavirae</taxon>
        <taxon>Kitrinoviricota</taxon>
        <taxon>Alsuviricetes</taxon>
        <taxon>Tymovirales</taxon>
        <taxon>Alphaflexiviridae</taxon>
        <taxon>Potexvirus</taxon>
    </lineage>
</organism>
<dbReference type="EMBL" id="D13747">
    <property type="protein sequence ID" value="BAA02894.1"/>
    <property type="molecule type" value="Genomic_RNA"/>
</dbReference>
<dbReference type="PIR" id="JT0473">
    <property type="entry name" value="WMWGN3"/>
</dbReference>
<dbReference type="RefSeq" id="NP_040781.1">
    <property type="nucleotide sequence ID" value="NC_001441.1"/>
</dbReference>
<dbReference type="KEGG" id="vg:1494017"/>
<dbReference type="OrthoDB" id="28712at10239"/>
<dbReference type="Proteomes" id="UP000008865">
    <property type="component" value="Genome"/>
</dbReference>
<dbReference type="GO" id="GO:0044167">
    <property type="term" value="C:host cell endoplasmic reticulum membrane"/>
    <property type="evidence" value="ECO:0007669"/>
    <property type="project" value="UniProtKB-SubCell"/>
</dbReference>
<dbReference type="GO" id="GO:0016020">
    <property type="term" value="C:membrane"/>
    <property type="evidence" value="ECO:0007669"/>
    <property type="project" value="UniProtKB-KW"/>
</dbReference>
<dbReference type="GO" id="GO:0046740">
    <property type="term" value="P:transport of virus in host, cell to cell"/>
    <property type="evidence" value="ECO:0007669"/>
    <property type="project" value="UniProtKB-KW"/>
</dbReference>
<dbReference type="InterPro" id="IPR003411">
    <property type="entry name" value="TGBp3"/>
</dbReference>
<dbReference type="Pfam" id="PF02495">
    <property type="entry name" value="TGBp3"/>
    <property type="match status" value="1"/>
</dbReference>
<name>TGB3_NMV</name>
<organismHost>
    <name type="scientific">Narcissus pseudonarcissus</name>
    <name type="common">Daffodil</name>
    <dbReference type="NCBI Taxonomy" id="39639"/>
</organismHost>
<sequence>MQTAPREYSTSGPTAVLAPTTNTQHYAPYSLYRFLSSHKLDLLLGIALLVFLYVITAAPKEVCQVVITGESVVIRNCQQPDRILANLNLSPWNGVKFPLL</sequence>
<evidence type="ECO:0000250" key="1"/>
<evidence type="ECO:0000255" key="2"/>
<evidence type="ECO:0000305" key="3"/>
<gene>
    <name type="ORF">ORF4</name>
</gene>
<protein>
    <recommendedName>
        <fullName>Movement protein TGBp3</fullName>
    </recommendedName>
    <alternativeName>
        <fullName>7 kDa protein</fullName>
    </alternativeName>
    <alternativeName>
        <fullName>Triple gene block 3 protein</fullName>
        <shortName>TGBp3</shortName>
    </alternativeName>
</protein>
<proteinExistence type="inferred from homology"/>
<comment type="function">
    <text evidence="1">Plays a role in viral cell-to-cell propagation, by facilitating genome transport to neighboring plant cells through plasmosdesmata. May induce the formation of granular vesicles derived from the Endoplasmic reticulum, which align on actin filaments (By similarity).</text>
</comment>
<comment type="subcellular location">
    <subcellularLocation>
        <location evidence="1">Host endoplasmic reticulum membrane</location>
    </subcellularLocation>
</comment>
<comment type="miscellaneous">
    <text>TGBp1, TGBp2 and TGBp3 seem to act together for cell-to-cell propagation. TGBp1 is the main movement protein that physically cross the plasmodesma with the viral genome. TGBp2 and TGBp3 would facilitate TGBp1 function.</text>
</comment>
<comment type="similarity">
    <text evidence="3">Belongs to the Tymovirales TGBp3 protein family.</text>
</comment>
<feature type="chain" id="PRO_0000222603" description="Movement protein TGBp3">
    <location>
        <begin position="1"/>
        <end position="100"/>
    </location>
</feature>
<feature type="topological domain" description="Lumenal" evidence="2">
    <location>
        <begin position="1"/>
        <end position="41"/>
    </location>
</feature>
<feature type="transmembrane region" description="Helical" evidence="2">
    <location>
        <begin position="42"/>
        <end position="59"/>
    </location>
</feature>
<feature type="topological domain" description="Cytoplasmic" evidence="2">
    <location>
        <begin position="60"/>
        <end position="100"/>
    </location>
</feature>
<keyword id="KW-1038">Host endoplasmic reticulum</keyword>
<keyword id="KW-1043">Host membrane</keyword>
<keyword id="KW-0472">Membrane</keyword>
<keyword id="KW-1185">Reference proteome</keyword>
<keyword id="KW-0812">Transmembrane</keyword>
<keyword id="KW-1133">Transmembrane helix</keyword>
<keyword id="KW-0813">Transport</keyword>
<keyword id="KW-0916">Viral movement protein</keyword>